<gene>
    <name evidence="1" type="primary">metG</name>
    <name type="ordered locus">YPO1522</name>
    <name type="ordered locus">y2648</name>
    <name type="ordered locus">YP_1411</name>
</gene>
<organism>
    <name type="scientific">Yersinia pestis</name>
    <dbReference type="NCBI Taxonomy" id="632"/>
    <lineage>
        <taxon>Bacteria</taxon>
        <taxon>Pseudomonadati</taxon>
        <taxon>Pseudomonadota</taxon>
        <taxon>Gammaproteobacteria</taxon>
        <taxon>Enterobacterales</taxon>
        <taxon>Yersiniaceae</taxon>
        <taxon>Yersinia</taxon>
    </lineage>
</organism>
<evidence type="ECO:0000255" key="1">
    <source>
        <dbReference type="HAMAP-Rule" id="MF_00098"/>
    </source>
</evidence>
<proteinExistence type="inferred from homology"/>
<dbReference type="EC" id="6.1.1.10" evidence="1"/>
<dbReference type="EMBL" id="AL590842">
    <property type="protein sequence ID" value="CAL20168.1"/>
    <property type="molecule type" value="Genomic_DNA"/>
</dbReference>
<dbReference type="EMBL" id="AE009952">
    <property type="protein sequence ID" value="AAM86201.1"/>
    <property type="molecule type" value="Genomic_DNA"/>
</dbReference>
<dbReference type="EMBL" id="AE017042">
    <property type="protein sequence ID" value="AAS61652.1"/>
    <property type="molecule type" value="Genomic_DNA"/>
</dbReference>
<dbReference type="PIR" id="AF0185">
    <property type="entry name" value="AF0185"/>
</dbReference>
<dbReference type="RefSeq" id="WP_002211870.1">
    <property type="nucleotide sequence ID" value="NZ_WUCM01000031.1"/>
</dbReference>
<dbReference type="RefSeq" id="YP_002346538.1">
    <property type="nucleotide sequence ID" value="NC_003143.1"/>
</dbReference>
<dbReference type="SMR" id="Q8ZG01"/>
<dbReference type="IntAct" id="Q8ZG01">
    <property type="interactions" value="2"/>
</dbReference>
<dbReference type="STRING" id="214092.YPO1522"/>
<dbReference type="PaxDb" id="214092-YPO1522"/>
<dbReference type="DNASU" id="1147595"/>
<dbReference type="EnsemblBacteria" id="AAS61652">
    <property type="protein sequence ID" value="AAS61652"/>
    <property type="gene ID" value="YP_1411"/>
</dbReference>
<dbReference type="GeneID" id="57977046"/>
<dbReference type="KEGG" id="ype:YPO1522"/>
<dbReference type="KEGG" id="ypk:y2648"/>
<dbReference type="KEGG" id="ypm:YP_1411"/>
<dbReference type="PATRIC" id="fig|214092.21.peg.1857"/>
<dbReference type="eggNOG" id="COG0073">
    <property type="taxonomic scope" value="Bacteria"/>
</dbReference>
<dbReference type="eggNOG" id="COG0143">
    <property type="taxonomic scope" value="Bacteria"/>
</dbReference>
<dbReference type="HOGENOM" id="CLU_009710_7_0_6"/>
<dbReference type="OMA" id="NMFLPDR"/>
<dbReference type="OrthoDB" id="9810191at2"/>
<dbReference type="Proteomes" id="UP000000815">
    <property type="component" value="Chromosome"/>
</dbReference>
<dbReference type="Proteomes" id="UP000001019">
    <property type="component" value="Chromosome"/>
</dbReference>
<dbReference type="Proteomes" id="UP000002490">
    <property type="component" value="Chromosome"/>
</dbReference>
<dbReference type="GO" id="GO:0005829">
    <property type="term" value="C:cytosol"/>
    <property type="evidence" value="ECO:0000318"/>
    <property type="project" value="GO_Central"/>
</dbReference>
<dbReference type="GO" id="GO:0005524">
    <property type="term" value="F:ATP binding"/>
    <property type="evidence" value="ECO:0007669"/>
    <property type="project" value="UniProtKB-UniRule"/>
</dbReference>
<dbReference type="GO" id="GO:0046872">
    <property type="term" value="F:metal ion binding"/>
    <property type="evidence" value="ECO:0007669"/>
    <property type="project" value="UniProtKB-KW"/>
</dbReference>
<dbReference type="GO" id="GO:0004825">
    <property type="term" value="F:methionine-tRNA ligase activity"/>
    <property type="evidence" value="ECO:0000318"/>
    <property type="project" value="GO_Central"/>
</dbReference>
<dbReference type="GO" id="GO:0000049">
    <property type="term" value="F:tRNA binding"/>
    <property type="evidence" value="ECO:0007669"/>
    <property type="project" value="UniProtKB-KW"/>
</dbReference>
<dbReference type="GO" id="GO:0006431">
    <property type="term" value="P:methionyl-tRNA aminoacylation"/>
    <property type="evidence" value="ECO:0000318"/>
    <property type="project" value="GO_Central"/>
</dbReference>
<dbReference type="CDD" id="cd07957">
    <property type="entry name" value="Anticodon_Ia_Met"/>
    <property type="match status" value="1"/>
</dbReference>
<dbReference type="CDD" id="cd00814">
    <property type="entry name" value="MetRS_core"/>
    <property type="match status" value="1"/>
</dbReference>
<dbReference type="CDD" id="cd02800">
    <property type="entry name" value="tRNA_bind_EcMetRS_like"/>
    <property type="match status" value="1"/>
</dbReference>
<dbReference type="FunFam" id="1.10.730.10:FF:000005">
    <property type="entry name" value="Methionine--tRNA ligase"/>
    <property type="match status" value="1"/>
</dbReference>
<dbReference type="FunFam" id="2.20.28.20:FF:000001">
    <property type="entry name" value="Methionine--tRNA ligase"/>
    <property type="match status" value="1"/>
</dbReference>
<dbReference type="FunFam" id="2.40.50.140:FF:000042">
    <property type="entry name" value="Methionine--tRNA ligase"/>
    <property type="match status" value="1"/>
</dbReference>
<dbReference type="Gene3D" id="3.40.50.620">
    <property type="entry name" value="HUPs"/>
    <property type="match status" value="1"/>
</dbReference>
<dbReference type="Gene3D" id="1.10.730.10">
    <property type="entry name" value="Isoleucyl-tRNA Synthetase, Domain 1"/>
    <property type="match status" value="1"/>
</dbReference>
<dbReference type="Gene3D" id="2.20.28.20">
    <property type="entry name" value="Methionyl-tRNA synthetase, Zn-domain"/>
    <property type="match status" value="1"/>
</dbReference>
<dbReference type="Gene3D" id="2.40.50.140">
    <property type="entry name" value="Nucleic acid-binding proteins"/>
    <property type="match status" value="1"/>
</dbReference>
<dbReference type="HAMAP" id="MF_00098">
    <property type="entry name" value="Met_tRNA_synth_type1"/>
    <property type="match status" value="1"/>
</dbReference>
<dbReference type="InterPro" id="IPR001412">
    <property type="entry name" value="aa-tRNA-synth_I_CS"/>
</dbReference>
<dbReference type="InterPro" id="IPR041872">
    <property type="entry name" value="Anticodon_Met"/>
</dbReference>
<dbReference type="InterPro" id="IPR004495">
    <property type="entry name" value="Met-tRNA-synth_bsu_C"/>
</dbReference>
<dbReference type="InterPro" id="IPR023458">
    <property type="entry name" value="Met-tRNA_ligase_1"/>
</dbReference>
<dbReference type="InterPro" id="IPR014758">
    <property type="entry name" value="Met-tRNA_synth"/>
</dbReference>
<dbReference type="InterPro" id="IPR015413">
    <property type="entry name" value="Methionyl/Leucyl_tRNA_Synth"/>
</dbReference>
<dbReference type="InterPro" id="IPR033911">
    <property type="entry name" value="MetRS_core"/>
</dbReference>
<dbReference type="InterPro" id="IPR029038">
    <property type="entry name" value="MetRS_Zn"/>
</dbReference>
<dbReference type="InterPro" id="IPR012340">
    <property type="entry name" value="NA-bd_OB-fold"/>
</dbReference>
<dbReference type="InterPro" id="IPR014729">
    <property type="entry name" value="Rossmann-like_a/b/a_fold"/>
</dbReference>
<dbReference type="InterPro" id="IPR002547">
    <property type="entry name" value="tRNA-bd_dom"/>
</dbReference>
<dbReference type="InterPro" id="IPR009080">
    <property type="entry name" value="tRNAsynth_Ia_anticodon-bd"/>
</dbReference>
<dbReference type="NCBIfam" id="TIGR00398">
    <property type="entry name" value="metG"/>
    <property type="match status" value="1"/>
</dbReference>
<dbReference type="NCBIfam" id="TIGR00399">
    <property type="entry name" value="metG_C_term"/>
    <property type="match status" value="1"/>
</dbReference>
<dbReference type="NCBIfam" id="NF001100">
    <property type="entry name" value="PRK00133.1"/>
    <property type="match status" value="1"/>
</dbReference>
<dbReference type="PANTHER" id="PTHR45765">
    <property type="entry name" value="METHIONINE--TRNA LIGASE"/>
    <property type="match status" value="1"/>
</dbReference>
<dbReference type="PANTHER" id="PTHR45765:SF1">
    <property type="entry name" value="METHIONINE--TRNA LIGASE, CYTOPLASMIC"/>
    <property type="match status" value="1"/>
</dbReference>
<dbReference type="Pfam" id="PF19303">
    <property type="entry name" value="Anticodon_3"/>
    <property type="match status" value="1"/>
</dbReference>
<dbReference type="Pfam" id="PF09334">
    <property type="entry name" value="tRNA-synt_1g"/>
    <property type="match status" value="1"/>
</dbReference>
<dbReference type="Pfam" id="PF01588">
    <property type="entry name" value="tRNA_bind"/>
    <property type="match status" value="1"/>
</dbReference>
<dbReference type="PRINTS" id="PR01041">
    <property type="entry name" value="TRNASYNTHMET"/>
</dbReference>
<dbReference type="SUPFAM" id="SSF47323">
    <property type="entry name" value="Anticodon-binding domain of a subclass of class I aminoacyl-tRNA synthetases"/>
    <property type="match status" value="1"/>
</dbReference>
<dbReference type="SUPFAM" id="SSF57770">
    <property type="entry name" value="Methionyl-tRNA synthetase (MetRS), Zn-domain"/>
    <property type="match status" value="1"/>
</dbReference>
<dbReference type="SUPFAM" id="SSF50249">
    <property type="entry name" value="Nucleic acid-binding proteins"/>
    <property type="match status" value="1"/>
</dbReference>
<dbReference type="SUPFAM" id="SSF52374">
    <property type="entry name" value="Nucleotidylyl transferase"/>
    <property type="match status" value="1"/>
</dbReference>
<dbReference type="PROSITE" id="PS00178">
    <property type="entry name" value="AA_TRNA_LIGASE_I"/>
    <property type="match status" value="1"/>
</dbReference>
<dbReference type="PROSITE" id="PS50886">
    <property type="entry name" value="TRBD"/>
    <property type="match status" value="1"/>
</dbReference>
<keyword id="KW-0030">Aminoacyl-tRNA synthetase</keyword>
<keyword id="KW-0067">ATP-binding</keyword>
<keyword id="KW-0963">Cytoplasm</keyword>
<keyword id="KW-0436">Ligase</keyword>
<keyword id="KW-0479">Metal-binding</keyword>
<keyword id="KW-0547">Nucleotide-binding</keyword>
<keyword id="KW-0648">Protein biosynthesis</keyword>
<keyword id="KW-1185">Reference proteome</keyword>
<keyword id="KW-0694">RNA-binding</keyword>
<keyword id="KW-0820">tRNA-binding</keyword>
<keyword id="KW-0862">Zinc</keyword>
<name>SYM_YERPE</name>
<sequence>MAQVAKKILVTCALPYANGSIHLGHMLEHIQADIWVRFQRMRGNQVHFICADDAHGTPIMLKAQQMGIEPEQMIAEMSQEHQQDFAGFAISYDNYHSTHSDENRELSSLIYGRLKANGYIKNRTISQLYDPEKGMFLPDRFVKGTCPKCKAPEQYGDNCEVCGATYSPTELIDPKSAVSGATPVMRESEHFFFDLPAFSDMLQAWTRSGALQEQVANKMQEWFDSGLQQWDITRDAPYFGFEVPDAPGKYFYVWLDAPIGYMGAFKNLCDKRGDLDFDEFWGKDAKTDLYHFIGKDIVYFHSLFWPAMLEGSNFRKPTNLFVHGYVTVNGAKMSKSRGTFIKAGTYLKYLDADCLRYYYAAKLSSRIDDIDLNLEDFVQRVNADIVNKVVNLASRNAGFINKRFAGQLADQLADPVLYKTFTDAATSIADAYNNRESGKAIREIMALADVANRYVDEQAPWVVAKQEGRDADLHAICSMGINLFRVLMTYLKPVLPSLTERTEAFLNTELTWDSIEQPLLGHSITAFKALFNRIDLDKVNEMVASSKEDMAPATRVTGPLADDPIQETISFDDFAKVDMRIALIQQAEFVEGSDKLLKLTLELGGETRQVFSGIRSAYPDPKALEGRMTVMVANLAPRKMRFGVSEGMVMAAGPGGSDIFLLSPDSGAQPGMQVK</sequence>
<reference key="1">
    <citation type="journal article" date="2001" name="Nature">
        <title>Genome sequence of Yersinia pestis, the causative agent of plague.</title>
        <authorList>
            <person name="Parkhill J."/>
            <person name="Wren B.W."/>
            <person name="Thomson N.R."/>
            <person name="Titball R.W."/>
            <person name="Holden M.T.G."/>
            <person name="Prentice M.B."/>
            <person name="Sebaihia M."/>
            <person name="James K.D."/>
            <person name="Churcher C.M."/>
            <person name="Mungall K.L."/>
            <person name="Baker S."/>
            <person name="Basham D."/>
            <person name="Bentley S.D."/>
            <person name="Brooks K."/>
            <person name="Cerdeno-Tarraga A.-M."/>
            <person name="Chillingworth T."/>
            <person name="Cronin A."/>
            <person name="Davies R.M."/>
            <person name="Davis P."/>
            <person name="Dougan G."/>
            <person name="Feltwell T."/>
            <person name="Hamlin N."/>
            <person name="Holroyd S."/>
            <person name="Jagels K."/>
            <person name="Karlyshev A.V."/>
            <person name="Leather S."/>
            <person name="Moule S."/>
            <person name="Oyston P.C.F."/>
            <person name="Quail M.A."/>
            <person name="Rutherford K.M."/>
            <person name="Simmonds M."/>
            <person name="Skelton J."/>
            <person name="Stevens K."/>
            <person name="Whitehead S."/>
            <person name="Barrell B.G."/>
        </authorList>
    </citation>
    <scope>NUCLEOTIDE SEQUENCE [LARGE SCALE GENOMIC DNA]</scope>
    <source>
        <strain>CO-92 / Biovar Orientalis</strain>
    </source>
</reference>
<reference key="2">
    <citation type="journal article" date="2002" name="J. Bacteriol.">
        <title>Genome sequence of Yersinia pestis KIM.</title>
        <authorList>
            <person name="Deng W."/>
            <person name="Burland V."/>
            <person name="Plunkett G. III"/>
            <person name="Boutin A."/>
            <person name="Mayhew G.F."/>
            <person name="Liss P."/>
            <person name="Perna N.T."/>
            <person name="Rose D.J."/>
            <person name="Mau B."/>
            <person name="Zhou S."/>
            <person name="Schwartz D.C."/>
            <person name="Fetherston J.D."/>
            <person name="Lindler L.E."/>
            <person name="Brubaker R.R."/>
            <person name="Plano G.V."/>
            <person name="Straley S.C."/>
            <person name="McDonough K.A."/>
            <person name="Nilles M.L."/>
            <person name="Matson J.S."/>
            <person name="Blattner F.R."/>
            <person name="Perry R.D."/>
        </authorList>
    </citation>
    <scope>NUCLEOTIDE SEQUENCE [LARGE SCALE GENOMIC DNA]</scope>
    <source>
        <strain>KIM10+ / Biovar Mediaevalis</strain>
    </source>
</reference>
<reference key="3">
    <citation type="journal article" date="2004" name="DNA Res.">
        <title>Complete genome sequence of Yersinia pestis strain 91001, an isolate avirulent to humans.</title>
        <authorList>
            <person name="Song Y."/>
            <person name="Tong Z."/>
            <person name="Wang J."/>
            <person name="Wang L."/>
            <person name="Guo Z."/>
            <person name="Han Y."/>
            <person name="Zhang J."/>
            <person name="Pei D."/>
            <person name="Zhou D."/>
            <person name="Qin H."/>
            <person name="Pang X."/>
            <person name="Han Y."/>
            <person name="Zhai J."/>
            <person name="Li M."/>
            <person name="Cui B."/>
            <person name="Qi Z."/>
            <person name="Jin L."/>
            <person name="Dai R."/>
            <person name="Chen F."/>
            <person name="Li S."/>
            <person name="Ye C."/>
            <person name="Du Z."/>
            <person name="Lin W."/>
            <person name="Wang J."/>
            <person name="Yu J."/>
            <person name="Yang H."/>
            <person name="Wang J."/>
            <person name="Huang P."/>
            <person name="Yang R."/>
        </authorList>
    </citation>
    <scope>NUCLEOTIDE SEQUENCE [LARGE SCALE GENOMIC DNA]</scope>
    <source>
        <strain>91001 / Biovar Mediaevalis</strain>
    </source>
</reference>
<comment type="function">
    <text evidence="1">Is required not only for elongation of protein synthesis but also for the initiation of all mRNA translation through initiator tRNA(fMet) aminoacylation.</text>
</comment>
<comment type="catalytic activity">
    <reaction evidence="1">
        <text>tRNA(Met) + L-methionine + ATP = L-methionyl-tRNA(Met) + AMP + diphosphate</text>
        <dbReference type="Rhea" id="RHEA:13481"/>
        <dbReference type="Rhea" id="RHEA-COMP:9667"/>
        <dbReference type="Rhea" id="RHEA-COMP:9698"/>
        <dbReference type="ChEBI" id="CHEBI:30616"/>
        <dbReference type="ChEBI" id="CHEBI:33019"/>
        <dbReference type="ChEBI" id="CHEBI:57844"/>
        <dbReference type="ChEBI" id="CHEBI:78442"/>
        <dbReference type="ChEBI" id="CHEBI:78530"/>
        <dbReference type="ChEBI" id="CHEBI:456215"/>
        <dbReference type="EC" id="6.1.1.10"/>
    </reaction>
</comment>
<comment type="cofactor">
    <cofactor evidence="1">
        <name>Zn(2+)</name>
        <dbReference type="ChEBI" id="CHEBI:29105"/>
    </cofactor>
    <text evidence="1">Binds 1 zinc ion per subunit.</text>
</comment>
<comment type="subunit">
    <text evidence="1">Homodimer.</text>
</comment>
<comment type="subcellular location">
    <subcellularLocation>
        <location evidence="1">Cytoplasm</location>
    </subcellularLocation>
</comment>
<comment type="similarity">
    <text evidence="1">Belongs to the class-I aminoacyl-tRNA synthetase family. MetG type 1 subfamily.</text>
</comment>
<accession>Q8ZG01</accession>
<accession>Q0WGQ0</accession>
<protein>
    <recommendedName>
        <fullName evidence="1">Methionine--tRNA ligase</fullName>
        <ecNumber evidence="1">6.1.1.10</ecNumber>
    </recommendedName>
    <alternativeName>
        <fullName evidence="1">Methionyl-tRNA synthetase</fullName>
        <shortName evidence="1">MetRS</shortName>
    </alternativeName>
</protein>
<feature type="chain" id="PRO_0000139180" description="Methionine--tRNA ligase">
    <location>
        <begin position="1"/>
        <end position="675"/>
    </location>
</feature>
<feature type="domain" description="tRNA-binding" evidence="1">
    <location>
        <begin position="573"/>
        <end position="675"/>
    </location>
</feature>
<feature type="short sequence motif" description="'HIGH' region">
    <location>
        <begin position="15"/>
        <end position="25"/>
    </location>
</feature>
<feature type="short sequence motif" description="'KMSKS' region">
    <location>
        <begin position="332"/>
        <end position="336"/>
    </location>
</feature>
<feature type="binding site" evidence="1">
    <location>
        <position position="146"/>
    </location>
    <ligand>
        <name>Zn(2+)</name>
        <dbReference type="ChEBI" id="CHEBI:29105"/>
    </ligand>
</feature>
<feature type="binding site" evidence="1">
    <location>
        <position position="149"/>
    </location>
    <ligand>
        <name>Zn(2+)</name>
        <dbReference type="ChEBI" id="CHEBI:29105"/>
    </ligand>
</feature>
<feature type="binding site" evidence="1">
    <location>
        <position position="159"/>
    </location>
    <ligand>
        <name>Zn(2+)</name>
        <dbReference type="ChEBI" id="CHEBI:29105"/>
    </ligand>
</feature>
<feature type="binding site" evidence="1">
    <location>
        <position position="162"/>
    </location>
    <ligand>
        <name>Zn(2+)</name>
        <dbReference type="ChEBI" id="CHEBI:29105"/>
    </ligand>
</feature>
<feature type="binding site" evidence="1">
    <location>
        <position position="335"/>
    </location>
    <ligand>
        <name>ATP</name>
        <dbReference type="ChEBI" id="CHEBI:30616"/>
    </ligand>
</feature>